<gene>
    <name evidence="5" type="primary">KIN7L</name>
    <name evidence="6" type="ordered locus">At5g06670</name>
    <name evidence="7" type="ORF">F15M7.20</name>
</gene>
<protein>
    <recommendedName>
        <fullName evidence="5">Kinesin-like protein KIN-7L, chloroplastic</fullName>
    </recommendedName>
</protein>
<sequence length="977" mass="109134">MGSKQVSKTRNGGFSKLKTVESSASSTTSSSKLYQEASVDSHSSPTSSSVRSKPQLPPKPLQSKENVTVTVRFRPLSPREIRKGEEIAWYADGETIVRNENNQSIAYAYDRVFGPTTTTRNVYDVAAQHVVNGAMAGVNGTIFAYGVTSSGKTHTMHGNQRSPGIIPLAVKDAFSIIQETPRREFLLRVSYFEIYNEVVNDLLNPAGQNLRIREDEQGTYIEGIKEEVVLSPAHVLSLIAAGEEHRHIGSTSFNLLSSRSHTMFTLTIESSPLGDNNEGGAVHLSQLNLIDLAGSESSKAETSGLRRKEGSYINKSLLTLGTVISKLTDRRASHVPYRDSKLTRLLESSLSGHGRVSLICTVTPASSNSEETHNTLKFAHRAKHIEIQAAQNKIIDEKSLIKKYQYEIRQLKEELEQLKQGIKPVSQLKDISGDDIDIVLLKQKLEEEEDAKAALLSRIQRLTKLILVSNKTPQTSRFSYRADPRRRHSFGEEELAYLPHKRRDLTDDENLELYVSREGTPEIIDDAFIEEKKTRKHGLLNWLKIKKKDSSLGGSSLSDKSSAVKSNSTPSTPQGEGSDFHTESRLSEGSALADQIIETMENREAHEDSFHEIETPETRIKMIDQMEILREQQKTLSEEMAQQSRSFKLLSEEAAKAPQNEEIKAEIINLNGDIKAKNDQIATLGKQILDFVIASHDELDKSDIVQAVSEMRAQLNEKCFELEVKAADNRIIQEQLTEKTSFCEDLQEEVANLKQQLSDALELGDINSVTCHMQQSSQSPNKNEEKVIEAQAFEIEELKLKAAELSELNEQLEIRNKKLAEESSYAKELASAAAIELKALSEEIARLMNHNERLAADLAAVQKSSVTTPQGKTGNLRNGRRESVSKRKEQENSLMELKRELTVSKEREVSFEAALIEKIQREAELQRTVEESKQREAYLENELANMWGLVAKLRSQGAANSGLSDSVSETRIEHFGT</sequence>
<organism>
    <name type="scientific">Arabidopsis thaliana</name>
    <name type="common">Mouse-ear cress</name>
    <dbReference type="NCBI Taxonomy" id="3702"/>
    <lineage>
        <taxon>Eukaryota</taxon>
        <taxon>Viridiplantae</taxon>
        <taxon>Streptophyta</taxon>
        <taxon>Embryophyta</taxon>
        <taxon>Tracheophyta</taxon>
        <taxon>Spermatophyta</taxon>
        <taxon>Magnoliopsida</taxon>
        <taxon>eudicotyledons</taxon>
        <taxon>Gunneridae</taxon>
        <taxon>Pentapetalae</taxon>
        <taxon>rosids</taxon>
        <taxon>malvids</taxon>
        <taxon>Brassicales</taxon>
        <taxon>Brassicaceae</taxon>
        <taxon>Camelineae</taxon>
        <taxon>Arabidopsis</taxon>
    </lineage>
</organism>
<keyword id="KW-0067">ATP-binding</keyword>
<keyword id="KW-0150">Chloroplast</keyword>
<keyword id="KW-0175">Coiled coil</keyword>
<keyword id="KW-0493">Microtubule</keyword>
<keyword id="KW-0505">Motor protein</keyword>
<keyword id="KW-0547">Nucleotide-binding</keyword>
<keyword id="KW-0934">Plastid</keyword>
<keyword id="KW-1185">Reference proteome</keyword>
<keyword id="KW-0809">Transit peptide</keyword>
<reference key="1">
    <citation type="submission" date="2000-06" db="EMBL/GenBank/DDBJ databases">
        <title>Structural analysis of Arabidopsis thaliana chromosome 5. XI.</title>
        <authorList>
            <person name="Kaneko T."/>
            <person name="Katoh T."/>
            <person name="Asamizu E."/>
            <person name="Sato S."/>
            <person name="Nakamura Y."/>
            <person name="Kotani H."/>
            <person name="Tabata S."/>
        </authorList>
    </citation>
    <scope>NUCLEOTIDE SEQUENCE [LARGE SCALE GENOMIC DNA]</scope>
    <source>
        <strain>cv. Columbia</strain>
    </source>
</reference>
<reference key="2">
    <citation type="journal article" date="2017" name="Plant J.">
        <title>Araport11: a complete reannotation of the Arabidopsis thaliana reference genome.</title>
        <authorList>
            <person name="Cheng C.Y."/>
            <person name="Krishnakumar V."/>
            <person name="Chan A.P."/>
            <person name="Thibaud-Nissen F."/>
            <person name="Schobel S."/>
            <person name="Town C.D."/>
        </authorList>
    </citation>
    <scope>GENOME REANNOTATION</scope>
    <source>
        <strain>cv. Columbia</strain>
    </source>
</reference>
<reference key="3">
    <citation type="journal article" date="2001" name="BMC Genomics">
        <title>Kinesins in the Arabidopsis genome: a comparative analysis among eukaryotes.</title>
        <authorList>
            <person name="Reddy A.S."/>
            <person name="Day I.S."/>
        </authorList>
    </citation>
    <scope>GENE FAMILY</scope>
</reference>
<reference key="4">
    <citation type="journal article" date="2006" name="BMC Genomics">
        <title>Comprehensive comparative analysis of kinesins in photosynthetic eukaryotes.</title>
        <authorList>
            <person name="Richardson D.N."/>
            <person name="Simmons M.P."/>
            <person name="Reddy A.S."/>
        </authorList>
    </citation>
    <scope>GENE FAMILY</scope>
    <scope>NOMENCLATURE</scope>
</reference>
<reference key="5">
    <citation type="journal article" date="2012" name="Protoplasma">
        <title>Functions of the Arabidopsis kinesin superfamily of microtubule-based motor proteins.</title>
        <authorList>
            <person name="Zhu C."/>
            <person name="Dixit R."/>
        </authorList>
    </citation>
    <scope>REVIEW</scope>
</reference>
<comment type="subcellular location">
    <subcellularLocation>
        <location evidence="1">Plastid</location>
        <location evidence="1">Chloroplast</location>
    </subcellularLocation>
</comment>
<comment type="similarity">
    <text evidence="4">Belongs to the TRAFAC class myosin-kinesin ATPase superfamily. Kinesin family. KIN-7 subfamily.</text>
</comment>
<comment type="sequence caution" evidence="5">
    <conflict type="erroneous gene model prediction">
        <sequence resource="EMBL-CDS" id="AED91048"/>
    </conflict>
</comment>
<comment type="sequence caution" evidence="5">
    <conflict type="erroneous gene model prediction">
        <sequence resource="EMBL-CDS" id="BAB11416"/>
    </conflict>
</comment>
<accession>F4K3X8</accession>
<accession>Q9FG03</accession>
<feature type="transit peptide" description="Chloroplast" evidence="1">
    <location>
        <begin position="1"/>
        <end status="unknown"/>
    </location>
</feature>
<feature type="chain" id="PRO_0000436470" description="Kinesin-like protein KIN-7L, chloroplastic">
    <location>
        <begin status="unknown"/>
        <end position="977"/>
    </location>
</feature>
<feature type="domain" description="Kinesin motor" evidence="2">
    <location>
        <begin position="66"/>
        <end position="385"/>
    </location>
</feature>
<feature type="region of interest" description="Disordered" evidence="3">
    <location>
        <begin position="1"/>
        <end position="66"/>
    </location>
</feature>
<feature type="region of interest" description="Disordered" evidence="3">
    <location>
        <begin position="549"/>
        <end position="589"/>
    </location>
</feature>
<feature type="region of interest" description="Disordered" evidence="3">
    <location>
        <begin position="864"/>
        <end position="891"/>
    </location>
</feature>
<feature type="region of interest" description="Disordered" evidence="3">
    <location>
        <begin position="958"/>
        <end position="977"/>
    </location>
</feature>
<feature type="coiled-coil region" evidence="1">
    <location>
        <begin position="386"/>
        <end position="471"/>
    </location>
</feature>
<feature type="coiled-coil region" evidence="1">
    <location>
        <begin position="626"/>
        <end position="688"/>
    </location>
</feature>
<feature type="coiled-coil region" evidence="1">
    <location>
        <begin position="732"/>
        <end position="942"/>
    </location>
</feature>
<feature type="compositionally biased region" description="Polar residues" evidence="3">
    <location>
        <begin position="1"/>
        <end position="12"/>
    </location>
</feature>
<feature type="compositionally biased region" description="Low complexity" evidence="3">
    <location>
        <begin position="22"/>
        <end position="31"/>
    </location>
</feature>
<feature type="compositionally biased region" description="Low complexity" evidence="3">
    <location>
        <begin position="38"/>
        <end position="54"/>
    </location>
</feature>
<feature type="compositionally biased region" description="Low complexity" evidence="3">
    <location>
        <begin position="551"/>
        <end position="561"/>
    </location>
</feature>
<feature type="compositionally biased region" description="Polar residues" evidence="3">
    <location>
        <begin position="563"/>
        <end position="575"/>
    </location>
</feature>
<feature type="compositionally biased region" description="Polar residues" evidence="3">
    <location>
        <begin position="864"/>
        <end position="876"/>
    </location>
</feature>
<feature type="compositionally biased region" description="Basic and acidic residues" evidence="3">
    <location>
        <begin position="879"/>
        <end position="891"/>
    </location>
</feature>
<feature type="compositionally biased region" description="Polar residues" evidence="3">
    <location>
        <begin position="958"/>
        <end position="967"/>
    </location>
</feature>
<feature type="compositionally biased region" description="Basic and acidic residues" evidence="3">
    <location>
        <begin position="968"/>
        <end position="977"/>
    </location>
</feature>
<feature type="binding site" evidence="2">
    <location>
        <begin position="146"/>
        <end position="153"/>
    </location>
    <ligand>
        <name>ATP</name>
        <dbReference type="ChEBI" id="CHEBI:30616"/>
    </ligand>
</feature>
<proteinExistence type="inferred from homology"/>
<dbReference type="EMBL" id="AP002543">
    <property type="protein sequence ID" value="BAB11416.1"/>
    <property type="status" value="ALT_SEQ"/>
    <property type="molecule type" value="Genomic_DNA"/>
</dbReference>
<dbReference type="EMBL" id="AP002032">
    <property type="protein sequence ID" value="BAB11416.1"/>
    <property type="status" value="JOINED"/>
    <property type="molecule type" value="Genomic_DNA"/>
</dbReference>
<dbReference type="EMBL" id="CP002688">
    <property type="protein sequence ID" value="AED91048.1"/>
    <property type="status" value="ALT_SEQ"/>
    <property type="molecule type" value="Genomic_DNA"/>
</dbReference>
<dbReference type="EMBL" id="CP002688">
    <property type="protein sequence ID" value="ANM70790.1"/>
    <property type="molecule type" value="Genomic_DNA"/>
</dbReference>
<dbReference type="EMBL" id="CP002688">
    <property type="protein sequence ID" value="ANM70791.1"/>
    <property type="molecule type" value="Genomic_DNA"/>
</dbReference>
<dbReference type="RefSeq" id="NP_001318493.1">
    <property type="nucleotide sequence ID" value="NM_001342891.1"/>
</dbReference>
<dbReference type="RefSeq" id="NP_001332372.1">
    <property type="nucleotide sequence ID" value="NM_001342893.1"/>
</dbReference>
<dbReference type="RefSeq" id="NP_001332373.1">
    <property type="nucleotide sequence ID" value="NM_001342892.1"/>
</dbReference>
<dbReference type="RefSeq" id="NP_196285.5">
    <property type="nucleotide sequence ID" value="NM_120750.5"/>
</dbReference>
<dbReference type="SMR" id="F4K3X8"/>
<dbReference type="FunCoup" id="F4K3X8">
    <property type="interactions" value="434"/>
</dbReference>
<dbReference type="STRING" id="3702.F4K3X8"/>
<dbReference type="GlyGen" id="F4K3X8">
    <property type="glycosylation" value="2 sites"/>
</dbReference>
<dbReference type="iPTMnet" id="F4K3X8"/>
<dbReference type="PaxDb" id="3702-AT5G06670.1"/>
<dbReference type="EnsemblPlants" id="AT5G06670.2">
    <property type="protein sequence ID" value="AT5G06670.2"/>
    <property type="gene ID" value="AT5G06670"/>
</dbReference>
<dbReference type="EnsemblPlants" id="AT5G06670.3">
    <property type="protein sequence ID" value="AT5G06670.3"/>
    <property type="gene ID" value="AT5G06670"/>
</dbReference>
<dbReference type="GeneID" id="830555"/>
<dbReference type="Gramene" id="AT5G06670.2">
    <property type="protein sequence ID" value="AT5G06670.2"/>
    <property type="gene ID" value="AT5G06670"/>
</dbReference>
<dbReference type="Gramene" id="AT5G06670.3">
    <property type="protein sequence ID" value="AT5G06670.3"/>
    <property type="gene ID" value="AT5G06670"/>
</dbReference>
<dbReference type="KEGG" id="ath:AT5G06670"/>
<dbReference type="Araport" id="AT5G06670"/>
<dbReference type="TAIR" id="AT5G06670">
    <property type="gene designation" value="KIN7.5"/>
</dbReference>
<dbReference type="eggNOG" id="KOG0242">
    <property type="taxonomic scope" value="Eukaryota"/>
</dbReference>
<dbReference type="HOGENOM" id="CLU_004957_0_0_1"/>
<dbReference type="InParanoid" id="F4K3X8"/>
<dbReference type="PRO" id="PR:F4K3X8"/>
<dbReference type="Proteomes" id="UP000006548">
    <property type="component" value="Chromosome 5"/>
</dbReference>
<dbReference type="ExpressionAtlas" id="F4K3X8">
    <property type="expression patterns" value="baseline and differential"/>
</dbReference>
<dbReference type="GO" id="GO:0009507">
    <property type="term" value="C:chloroplast"/>
    <property type="evidence" value="ECO:0007669"/>
    <property type="project" value="UniProtKB-SubCell"/>
</dbReference>
<dbReference type="GO" id="GO:0005874">
    <property type="term" value="C:microtubule"/>
    <property type="evidence" value="ECO:0007669"/>
    <property type="project" value="UniProtKB-KW"/>
</dbReference>
<dbReference type="GO" id="GO:0005524">
    <property type="term" value="F:ATP binding"/>
    <property type="evidence" value="ECO:0007669"/>
    <property type="project" value="UniProtKB-KW"/>
</dbReference>
<dbReference type="GO" id="GO:0008017">
    <property type="term" value="F:microtubule binding"/>
    <property type="evidence" value="ECO:0007669"/>
    <property type="project" value="InterPro"/>
</dbReference>
<dbReference type="GO" id="GO:0003777">
    <property type="term" value="F:microtubule motor activity"/>
    <property type="evidence" value="ECO:0007669"/>
    <property type="project" value="InterPro"/>
</dbReference>
<dbReference type="GO" id="GO:0007018">
    <property type="term" value="P:microtubule-based movement"/>
    <property type="evidence" value="ECO:0007669"/>
    <property type="project" value="InterPro"/>
</dbReference>
<dbReference type="CDD" id="cd01374">
    <property type="entry name" value="KISc_CENP_E"/>
    <property type="match status" value="1"/>
</dbReference>
<dbReference type="FunFam" id="3.40.850.10:FF:000014">
    <property type="entry name" value="Kinesin-like protein KIN-7G"/>
    <property type="match status" value="1"/>
</dbReference>
<dbReference type="Gene3D" id="3.40.850.10">
    <property type="entry name" value="Kinesin motor domain"/>
    <property type="match status" value="1"/>
</dbReference>
<dbReference type="InterPro" id="IPR027640">
    <property type="entry name" value="Kinesin-like_fam"/>
</dbReference>
<dbReference type="InterPro" id="IPR019821">
    <property type="entry name" value="Kinesin_motor_CS"/>
</dbReference>
<dbReference type="InterPro" id="IPR001752">
    <property type="entry name" value="Kinesin_motor_dom"/>
</dbReference>
<dbReference type="InterPro" id="IPR036961">
    <property type="entry name" value="Kinesin_motor_dom_sf"/>
</dbReference>
<dbReference type="InterPro" id="IPR027417">
    <property type="entry name" value="P-loop_NTPase"/>
</dbReference>
<dbReference type="PANTHER" id="PTHR47968">
    <property type="entry name" value="CENTROMERE PROTEIN E"/>
    <property type="match status" value="1"/>
</dbReference>
<dbReference type="PANTHER" id="PTHR47968:SF9">
    <property type="entry name" value="KINESIN-LIKE PROTEIN KIN-7K, CHLOROPLASTIC ISOFORM X1"/>
    <property type="match status" value="1"/>
</dbReference>
<dbReference type="Pfam" id="PF00225">
    <property type="entry name" value="Kinesin"/>
    <property type="match status" value="1"/>
</dbReference>
<dbReference type="PRINTS" id="PR00380">
    <property type="entry name" value="KINESINHEAVY"/>
</dbReference>
<dbReference type="SMART" id="SM00129">
    <property type="entry name" value="KISc"/>
    <property type="match status" value="1"/>
</dbReference>
<dbReference type="SUPFAM" id="SSF52540">
    <property type="entry name" value="P-loop containing nucleoside triphosphate hydrolases"/>
    <property type="match status" value="1"/>
</dbReference>
<dbReference type="PROSITE" id="PS00411">
    <property type="entry name" value="KINESIN_MOTOR_1"/>
    <property type="match status" value="1"/>
</dbReference>
<dbReference type="PROSITE" id="PS50067">
    <property type="entry name" value="KINESIN_MOTOR_2"/>
    <property type="match status" value="1"/>
</dbReference>
<evidence type="ECO:0000255" key="1"/>
<evidence type="ECO:0000255" key="2">
    <source>
        <dbReference type="PROSITE-ProRule" id="PRU00283"/>
    </source>
</evidence>
<evidence type="ECO:0000256" key="3">
    <source>
        <dbReference type="SAM" id="MobiDB-lite"/>
    </source>
</evidence>
<evidence type="ECO:0000303" key="4">
    <source>
    </source>
</evidence>
<evidence type="ECO:0000305" key="5"/>
<evidence type="ECO:0000312" key="6">
    <source>
        <dbReference type="Araport" id="AT5G06670"/>
    </source>
</evidence>
<evidence type="ECO:0000312" key="7">
    <source>
        <dbReference type="EMBL" id="BAB11416.1"/>
    </source>
</evidence>
<name>KN7L_ARATH</name>